<feature type="chain" id="PRO_0000052190" description="Cytochrome P450 93A3">
    <location>
        <begin position="1"/>
        <end position="510"/>
    </location>
</feature>
<feature type="transmembrane region" description="Helical" evidence="2">
    <location>
        <begin position="64"/>
        <end position="84"/>
    </location>
</feature>
<feature type="binding site" description="axial binding residue" evidence="1">
    <location>
        <position position="448"/>
    </location>
    <ligand>
        <name>heme</name>
        <dbReference type="ChEBI" id="CHEBI:30413"/>
    </ligand>
    <ligandPart>
        <name>Fe</name>
        <dbReference type="ChEBI" id="CHEBI:18248"/>
    </ligandPart>
</feature>
<protein>
    <recommendedName>
        <fullName>Cytochrome P450 93A3</fullName>
        <ecNumber>1.14.-.-</ecNumber>
    </recommendedName>
    <alternativeName>
        <fullName>Cytochrome P450 CP5</fullName>
    </alternativeName>
</protein>
<accession>O81973</accession>
<evidence type="ECO:0000250" key="1"/>
<evidence type="ECO:0000255" key="2"/>
<evidence type="ECO:0000305" key="3"/>
<comment type="cofactor">
    <cofactor evidence="1">
        <name>heme</name>
        <dbReference type="ChEBI" id="CHEBI:30413"/>
    </cofactor>
</comment>
<comment type="subcellular location">
    <subcellularLocation>
        <location evidence="3">Membrane</location>
        <topology evidence="3">Single-pass membrane protein</topology>
    </subcellularLocation>
</comment>
<comment type="induction">
    <text>By fungal elicitor.</text>
</comment>
<comment type="similarity">
    <text evidence="3">Belongs to the cytochrome P450 family.</text>
</comment>
<keyword id="KW-0349">Heme</keyword>
<keyword id="KW-0408">Iron</keyword>
<keyword id="KW-0472">Membrane</keyword>
<keyword id="KW-0479">Metal-binding</keyword>
<keyword id="KW-0503">Monooxygenase</keyword>
<keyword id="KW-0560">Oxidoreductase</keyword>
<keyword id="KW-1185">Reference proteome</keyword>
<keyword id="KW-0812">Transmembrane</keyword>
<keyword id="KW-1133">Transmembrane helix</keyword>
<reference key="1">
    <citation type="journal article" date="1998" name="Mol. Gen. Genet.">
        <title>Identification of elicitor-induced cytochrome P450s of soybean (Glycine max L.) using differential display of mRNA.</title>
        <authorList>
            <person name="Schopfer C.R."/>
            <person name="Ebel J."/>
        </authorList>
    </citation>
    <scope>NUCLEOTIDE SEQUENCE [MRNA]</scope>
    <source>
        <strain>cv. Harosoy 63</strain>
    </source>
</reference>
<name>C93A3_SOYBN</name>
<organism>
    <name type="scientific">Glycine max</name>
    <name type="common">Soybean</name>
    <name type="synonym">Glycine hispida</name>
    <dbReference type="NCBI Taxonomy" id="3847"/>
    <lineage>
        <taxon>Eukaryota</taxon>
        <taxon>Viridiplantae</taxon>
        <taxon>Streptophyta</taxon>
        <taxon>Embryophyta</taxon>
        <taxon>Tracheophyta</taxon>
        <taxon>Spermatophyta</taxon>
        <taxon>Magnoliopsida</taxon>
        <taxon>eudicotyledons</taxon>
        <taxon>Gunneridae</taxon>
        <taxon>Pentapetalae</taxon>
        <taxon>rosids</taxon>
        <taxon>fabids</taxon>
        <taxon>Fabales</taxon>
        <taxon>Fabaceae</taxon>
        <taxon>Papilionoideae</taxon>
        <taxon>50 kb inversion clade</taxon>
        <taxon>NPAAA clade</taxon>
        <taxon>indigoferoid/millettioid clade</taxon>
        <taxon>Phaseoleae</taxon>
        <taxon>Glycine</taxon>
        <taxon>Glycine subgen. Soja</taxon>
    </lineage>
</organism>
<sequence length="510" mass="57969">MAFQVLFICLISTIVFASILWRKQNKNKTLLPPSPMPLPIIGHLHLLSPTPHQDFHKLSLRYGPIIHLFLGSVPCVVASTAEAAKEFLKTHEPAFSNRPANTVAVETLTYGFQDFLFAPYGPYWKFMKKLCMSELLGGHMLDQFLPVRQXETKKFIKRVLQKGISGEAVDFGGEFITLSNNIVSRMIVSQTSTTEDENEVEEMRKLVKDAAELSGKFNISDFVSFLKRFDLQGFNKRLEKIRDCFDTVLDRIIKQREEERRNKNETVGKREFKDMLDVLFDISEDESSEIKLNKENIKAFILDILIAGTDTSAVTMEWAMAELINNPGVLEKARQEMDAVVGKSRIVEESDIANLPYLQGIVRETLRLHPAGPLLFRESSRRAVVCGYDIPAKTRLFVNVWAIGRDPNHWENPLEFRPERFVENGKSQLDVRGQHYHLLPFGSGRRACPGTSLALQVVHVNLAVLIQCFQWKVDCDNGKVNMEEKAGITLPRAHPIICVPIRRLNPFPVV</sequence>
<gene>
    <name type="primary">CYP93A3</name>
</gene>
<proteinExistence type="evidence at transcript level"/>
<dbReference type="EC" id="1.14.-.-"/>
<dbReference type="EMBL" id="Y10492">
    <property type="protein sequence ID" value="CAA71516.1"/>
    <property type="molecule type" value="mRNA"/>
</dbReference>
<dbReference type="PIR" id="T07119">
    <property type="entry name" value="T07119"/>
</dbReference>
<dbReference type="RefSeq" id="NP_001304452.1">
    <property type="nucleotide sequence ID" value="NM_001317523.1"/>
</dbReference>
<dbReference type="FunCoup" id="O81973">
    <property type="interactions" value="331"/>
</dbReference>
<dbReference type="STRING" id="3847.O81973"/>
<dbReference type="PaxDb" id="3847-GLYMA03G29790.1"/>
<dbReference type="GeneID" id="100815706"/>
<dbReference type="KEGG" id="gmx:100815706"/>
<dbReference type="eggNOG" id="KOG0156">
    <property type="taxonomic scope" value="Eukaryota"/>
</dbReference>
<dbReference type="InParanoid" id="O81973"/>
<dbReference type="OrthoDB" id="1103324at2759"/>
<dbReference type="Proteomes" id="UP000008827">
    <property type="component" value="Unplaced"/>
</dbReference>
<dbReference type="GO" id="GO:0016020">
    <property type="term" value="C:membrane"/>
    <property type="evidence" value="ECO:0000318"/>
    <property type="project" value="GO_Central"/>
</dbReference>
<dbReference type="GO" id="GO:0020037">
    <property type="term" value="F:heme binding"/>
    <property type="evidence" value="ECO:0007669"/>
    <property type="project" value="InterPro"/>
</dbReference>
<dbReference type="GO" id="GO:0005506">
    <property type="term" value="F:iron ion binding"/>
    <property type="evidence" value="ECO:0007669"/>
    <property type="project" value="InterPro"/>
</dbReference>
<dbReference type="GO" id="GO:0016709">
    <property type="term" value="F:oxidoreductase activity, acting on paired donors, with incorporation or reduction of molecular oxygen, NAD(P)H as one donor, and incorporation of one atom of oxygen"/>
    <property type="evidence" value="ECO:0000318"/>
    <property type="project" value="GO_Central"/>
</dbReference>
<dbReference type="CDD" id="cd20655">
    <property type="entry name" value="CYP93"/>
    <property type="match status" value="1"/>
</dbReference>
<dbReference type="FunFam" id="1.10.630.10:FF:000019">
    <property type="entry name" value="Cytochrome P450 family protein"/>
    <property type="match status" value="1"/>
</dbReference>
<dbReference type="Gene3D" id="1.10.630.10">
    <property type="entry name" value="Cytochrome P450"/>
    <property type="match status" value="1"/>
</dbReference>
<dbReference type="InterPro" id="IPR001128">
    <property type="entry name" value="Cyt_P450"/>
</dbReference>
<dbReference type="InterPro" id="IPR017972">
    <property type="entry name" value="Cyt_P450_CS"/>
</dbReference>
<dbReference type="InterPro" id="IPR002401">
    <property type="entry name" value="Cyt_P450_E_grp-I"/>
</dbReference>
<dbReference type="InterPro" id="IPR036396">
    <property type="entry name" value="Cyt_P450_sf"/>
</dbReference>
<dbReference type="PANTHER" id="PTHR47944:SF17">
    <property type="entry name" value="3,9-DIHYDROXYPTEROCARPAN 6A-MONOOXYGENASE"/>
    <property type="match status" value="1"/>
</dbReference>
<dbReference type="PANTHER" id="PTHR47944">
    <property type="entry name" value="CYTOCHROME P450 98A9"/>
    <property type="match status" value="1"/>
</dbReference>
<dbReference type="Pfam" id="PF00067">
    <property type="entry name" value="p450"/>
    <property type="match status" value="1"/>
</dbReference>
<dbReference type="PRINTS" id="PR00463">
    <property type="entry name" value="EP450I"/>
</dbReference>
<dbReference type="PRINTS" id="PR00385">
    <property type="entry name" value="P450"/>
</dbReference>
<dbReference type="SUPFAM" id="SSF48264">
    <property type="entry name" value="Cytochrome P450"/>
    <property type="match status" value="1"/>
</dbReference>
<dbReference type="PROSITE" id="PS00086">
    <property type="entry name" value="CYTOCHROME_P450"/>
    <property type="match status" value="1"/>
</dbReference>